<evidence type="ECO:0000255" key="1"/>
<evidence type="ECO:0000269" key="2">
    <source>
    </source>
</evidence>
<evidence type="ECO:0000305" key="3"/>
<proteinExistence type="inferred from homology"/>
<accession>O14264</accession>
<protein>
    <recommendedName>
        <fullName>Uncharacterized protein C7D4.09c</fullName>
    </recommendedName>
</protein>
<comment type="subcellular location">
    <subcellularLocation>
        <location evidence="2">Endoplasmic reticulum membrane</location>
        <topology evidence="2">Multi-pass membrane protein</topology>
    </subcellularLocation>
</comment>
<comment type="similarity">
    <text evidence="3">Belongs to the steroid 5-alpha reductase family.</text>
</comment>
<keyword id="KW-0256">Endoplasmic reticulum</keyword>
<keyword id="KW-0472">Membrane</keyword>
<keyword id="KW-1185">Reference proteome</keyword>
<keyword id="KW-0812">Transmembrane</keyword>
<keyword id="KW-1133">Transmembrane helix</keyword>
<reference key="1">
    <citation type="journal article" date="2002" name="Nature">
        <title>The genome sequence of Schizosaccharomyces pombe.</title>
        <authorList>
            <person name="Wood V."/>
            <person name="Gwilliam R."/>
            <person name="Rajandream M.A."/>
            <person name="Lyne M.H."/>
            <person name="Lyne R."/>
            <person name="Stewart A."/>
            <person name="Sgouros J.G."/>
            <person name="Peat N."/>
            <person name="Hayles J."/>
            <person name="Baker S.G."/>
            <person name="Basham D."/>
            <person name="Bowman S."/>
            <person name="Brooks K."/>
            <person name="Brown D."/>
            <person name="Brown S."/>
            <person name="Chillingworth T."/>
            <person name="Churcher C.M."/>
            <person name="Collins M."/>
            <person name="Connor R."/>
            <person name="Cronin A."/>
            <person name="Davis P."/>
            <person name="Feltwell T."/>
            <person name="Fraser A."/>
            <person name="Gentles S."/>
            <person name="Goble A."/>
            <person name="Hamlin N."/>
            <person name="Harris D.E."/>
            <person name="Hidalgo J."/>
            <person name="Hodgson G."/>
            <person name="Holroyd S."/>
            <person name="Hornsby T."/>
            <person name="Howarth S."/>
            <person name="Huckle E.J."/>
            <person name="Hunt S."/>
            <person name="Jagels K."/>
            <person name="James K.D."/>
            <person name="Jones L."/>
            <person name="Jones M."/>
            <person name="Leather S."/>
            <person name="McDonald S."/>
            <person name="McLean J."/>
            <person name="Mooney P."/>
            <person name="Moule S."/>
            <person name="Mungall K.L."/>
            <person name="Murphy L.D."/>
            <person name="Niblett D."/>
            <person name="Odell C."/>
            <person name="Oliver K."/>
            <person name="O'Neil S."/>
            <person name="Pearson D."/>
            <person name="Quail M.A."/>
            <person name="Rabbinowitsch E."/>
            <person name="Rutherford K.M."/>
            <person name="Rutter S."/>
            <person name="Saunders D."/>
            <person name="Seeger K."/>
            <person name="Sharp S."/>
            <person name="Skelton J."/>
            <person name="Simmonds M.N."/>
            <person name="Squares R."/>
            <person name="Squares S."/>
            <person name="Stevens K."/>
            <person name="Taylor K."/>
            <person name="Taylor R.G."/>
            <person name="Tivey A."/>
            <person name="Walsh S.V."/>
            <person name="Warren T."/>
            <person name="Whitehead S."/>
            <person name="Woodward J.R."/>
            <person name="Volckaert G."/>
            <person name="Aert R."/>
            <person name="Robben J."/>
            <person name="Grymonprez B."/>
            <person name="Weltjens I."/>
            <person name="Vanstreels E."/>
            <person name="Rieger M."/>
            <person name="Schaefer M."/>
            <person name="Mueller-Auer S."/>
            <person name="Gabel C."/>
            <person name="Fuchs M."/>
            <person name="Duesterhoeft A."/>
            <person name="Fritzc C."/>
            <person name="Holzer E."/>
            <person name="Moestl D."/>
            <person name="Hilbert H."/>
            <person name="Borzym K."/>
            <person name="Langer I."/>
            <person name="Beck A."/>
            <person name="Lehrach H."/>
            <person name="Reinhardt R."/>
            <person name="Pohl T.M."/>
            <person name="Eger P."/>
            <person name="Zimmermann W."/>
            <person name="Wedler H."/>
            <person name="Wambutt R."/>
            <person name="Purnelle B."/>
            <person name="Goffeau A."/>
            <person name="Cadieu E."/>
            <person name="Dreano S."/>
            <person name="Gloux S."/>
            <person name="Lelaure V."/>
            <person name="Mottier S."/>
            <person name="Galibert F."/>
            <person name="Aves S.J."/>
            <person name="Xiang Z."/>
            <person name="Hunt C."/>
            <person name="Moore K."/>
            <person name="Hurst S.M."/>
            <person name="Lucas M."/>
            <person name="Rochet M."/>
            <person name="Gaillardin C."/>
            <person name="Tallada V.A."/>
            <person name="Garzon A."/>
            <person name="Thode G."/>
            <person name="Daga R.R."/>
            <person name="Cruzado L."/>
            <person name="Jimenez J."/>
            <person name="Sanchez M."/>
            <person name="del Rey F."/>
            <person name="Benito J."/>
            <person name="Dominguez A."/>
            <person name="Revuelta J.L."/>
            <person name="Moreno S."/>
            <person name="Armstrong J."/>
            <person name="Forsburg S.L."/>
            <person name="Cerutti L."/>
            <person name="Lowe T."/>
            <person name="McCombie W.R."/>
            <person name="Paulsen I."/>
            <person name="Potashkin J."/>
            <person name="Shpakovski G.V."/>
            <person name="Ussery D."/>
            <person name="Barrell B.G."/>
            <person name="Nurse P."/>
        </authorList>
    </citation>
    <scope>NUCLEOTIDE SEQUENCE [LARGE SCALE GENOMIC DNA]</scope>
    <source>
        <strain>972 / ATCC 24843</strain>
    </source>
</reference>
<reference key="2">
    <citation type="journal article" date="2006" name="Nat. Biotechnol.">
        <title>ORFeome cloning and global analysis of protein localization in the fission yeast Schizosaccharomyces pombe.</title>
        <authorList>
            <person name="Matsuyama A."/>
            <person name="Arai R."/>
            <person name="Yashiroda Y."/>
            <person name="Shirai A."/>
            <person name="Kamata A."/>
            <person name="Sekido S."/>
            <person name="Kobayashi Y."/>
            <person name="Hashimoto A."/>
            <person name="Hamamoto M."/>
            <person name="Hiraoka Y."/>
            <person name="Horinouchi S."/>
            <person name="Yoshida M."/>
        </authorList>
    </citation>
    <scope>SUBCELLULAR LOCATION [LARGE SCALE ANALYSIS]</scope>
</reference>
<dbReference type="EMBL" id="CU329670">
    <property type="protein sequence ID" value="CAB16726.2"/>
    <property type="molecule type" value="Genomic_DNA"/>
</dbReference>
<dbReference type="PIR" id="T39087">
    <property type="entry name" value="T39087"/>
</dbReference>
<dbReference type="RefSeq" id="NP_593849.1">
    <property type="nucleotide sequence ID" value="NM_001019278.2"/>
</dbReference>
<dbReference type="SMR" id="O14264"/>
<dbReference type="BioGRID" id="278080">
    <property type="interactions" value="1"/>
</dbReference>
<dbReference type="FunCoup" id="O14264">
    <property type="interactions" value="475"/>
</dbReference>
<dbReference type="STRING" id="284812.O14264"/>
<dbReference type="SwissPalm" id="O14264"/>
<dbReference type="PaxDb" id="4896-SPAC7D4.09c.1"/>
<dbReference type="EnsemblFungi" id="SPAC7D4.09c.1">
    <property type="protein sequence ID" value="SPAC7D4.09c.1:pep"/>
    <property type="gene ID" value="SPAC7D4.09c"/>
</dbReference>
<dbReference type="PomBase" id="SPAC7D4.09c"/>
<dbReference type="VEuPathDB" id="FungiDB:SPAC7D4.09c"/>
<dbReference type="eggNOG" id="KOG1640">
    <property type="taxonomic scope" value="Eukaryota"/>
</dbReference>
<dbReference type="HOGENOM" id="CLU_987498_0_0_1"/>
<dbReference type="InParanoid" id="O14264"/>
<dbReference type="OMA" id="NASHEHL"/>
<dbReference type="PhylomeDB" id="O14264"/>
<dbReference type="Reactome" id="R-SPO-193048">
    <property type="pathway name" value="Androgen biosynthesis"/>
</dbReference>
<dbReference type="Reactome" id="R-SPO-446199">
    <property type="pathway name" value="Synthesis of Dolichyl-phosphate"/>
</dbReference>
<dbReference type="PRO" id="PR:O14264"/>
<dbReference type="Proteomes" id="UP000002485">
    <property type="component" value="Chromosome I"/>
</dbReference>
<dbReference type="GO" id="GO:0005783">
    <property type="term" value="C:endoplasmic reticulum"/>
    <property type="evidence" value="ECO:0007005"/>
    <property type="project" value="PomBase"/>
</dbReference>
<dbReference type="GO" id="GO:0005789">
    <property type="term" value="C:endoplasmic reticulum membrane"/>
    <property type="evidence" value="ECO:0000303"/>
    <property type="project" value="PomBase"/>
</dbReference>
<dbReference type="GO" id="GO:0102389">
    <property type="term" value="F:polyprenol reductase activity"/>
    <property type="evidence" value="ECO:0000266"/>
    <property type="project" value="PomBase"/>
</dbReference>
<dbReference type="GO" id="GO:0019408">
    <property type="term" value="P:dolichol biosynthetic process"/>
    <property type="evidence" value="ECO:0000266"/>
    <property type="project" value="PomBase"/>
</dbReference>
<dbReference type="GO" id="GO:0006488">
    <property type="term" value="P:dolichol-linked oligosaccharide biosynthetic process"/>
    <property type="evidence" value="ECO:0000318"/>
    <property type="project" value="GO_Central"/>
</dbReference>
<dbReference type="Gene3D" id="1.20.120.1630">
    <property type="match status" value="1"/>
</dbReference>
<dbReference type="InterPro" id="IPR001104">
    <property type="entry name" value="3-oxo-5_a-steroid_4-DH_C"/>
</dbReference>
<dbReference type="InterPro" id="IPR039698">
    <property type="entry name" value="Dfg10/SRD5A3"/>
</dbReference>
<dbReference type="PANTHER" id="PTHR14624">
    <property type="entry name" value="DFG10 PROTEIN"/>
    <property type="match status" value="1"/>
</dbReference>
<dbReference type="PANTHER" id="PTHR14624:SF0">
    <property type="entry name" value="POLYPRENOL REDUCTASE"/>
    <property type="match status" value="1"/>
</dbReference>
<dbReference type="Pfam" id="PF02544">
    <property type="entry name" value="Steroid_dh"/>
    <property type="match status" value="1"/>
</dbReference>
<dbReference type="PROSITE" id="PS50244">
    <property type="entry name" value="S5A_REDUCTASE"/>
    <property type="match status" value="1"/>
</dbReference>
<name>YFP9_SCHPO</name>
<organism>
    <name type="scientific">Schizosaccharomyces pombe (strain 972 / ATCC 24843)</name>
    <name type="common">Fission yeast</name>
    <dbReference type="NCBI Taxonomy" id="284812"/>
    <lineage>
        <taxon>Eukaryota</taxon>
        <taxon>Fungi</taxon>
        <taxon>Dikarya</taxon>
        <taxon>Ascomycota</taxon>
        <taxon>Taphrinomycotina</taxon>
        <taxon>Schizosaccharomycetes</taxon>
        <taxon>Schizosaccharomycetales</taxon>
        <taxon>Schizosaccharomycetaceae</taxon>
        <taxon>Schizosaccharomyces</taxon>
    </lineage>
</organism>
<sequence>MQLLNNWYSLLLTEVAAYFTSTTLFVSILKNAPSLSWLMKYGGHDNFGLKPPLIATKLEVPKRWFWHFYAFISLLNPLFTFFILNTNFPIPIFKNIKEDLMYSKKLQVLLLIYEIHTLRRLYENLRFRKSGSKMLAGHYLLGYLFYTHTFLALLLCGRRSYENTMSSMQFVGLGIYAIGSIWQNASHEHLIAQKNHSQYLVLKKGCFKWITGPHYLGEIIVYTGIALIAQHWLIWLVLGWVLCNMVAISSSYACTVKNKEQSLDFRWTLIPFLY</sequence>
<feature type="chain" id="PRO_0000317696" description="Uncharacterized protein C7D4.09c">
    <location>
        <begin position="1"/>
        <end position="274"/>
    </location>
</feature>
<feature type="transmembrane region" description="Helical" evidence="1">
    <location>
        <begin position="9"/>
        <end position="29"/>
    </location>
</feature>
<feature type="transmembrane region" description="Helical" evidence="1">
    <location>
        <begin position="64"/>
        <end position="84"/>
    </location>
</feature>
<feature type="transmembrane region" description="Helical" evidence="1">
    <location>
        <begin position="135"/>
        <end position="155"/>
    </location>
</feature>
<feature type="transmembrane region" description="Helical" evidence="1">
    <location>
        <begin position="165"/>
        <end position="185"/>
    </location>
</feature>
<feature type="transmembrane region" description="Helical" evidence="1">
    <location>
        <begin position="219"/>
        <end position="239"/>
    </location>
</feature>
<gene>
    <name type="ORF">SPAC7D4.09c</name>
</gene>